<dbReference type="EC" id="6.3.3.3" evidence="1"/>
<dbReference type="EMBL" id="CP000518">
    <property type="protein sequence ID" value="ABL92330.1"/>
    <property type="molecule type" value="Genomic_DNA"/>
</dbReference>
<dbReference type="SMR" id="A1UHM2"/>
<dbReference type="STRING" id="189918.Mkms_3136"/>
<dbReference type="KEGG" id="mkm:Mkms_3136"/>
<dbReference type="HOGENOM" id="CLU_072551_1_0_11"/>
<dbReference type="OrthoDB" id="9802610at2"/>
<dbReference type="UniPathway" id="UPA00078">
    <property type="reaction ID" value="UER00161"/>
</dbReference>
<dbReference type="GO" id="GO:0005829">
    <property type="term" value="C:cytosol"/>
    <property type="evidence" value="ECO:0007669"/>
    <property type="project" value="TreeGrafter"/>
</dbReference>
<dbReference type="GO" id="GO:0005524">
    <property type="term" value="F:ATP binding"/>
    <property type="evidence" value="ECO:0007669"/>
    <property type="project" value="UniProtKB-UniRule"/>
</dbReference>
<dbReference type="GO" id="GO:0004141">
    <property type="term" value="F:dethiobiotin synthase activity"/>
    <property type="evidence" value="ECO:0007669"/>
    <property type="project" value="UniProtKB-UniRule"/>
</dbReference>
<dbReference type="GO" id="GO:0000287">
    <property type="term" value="F:magnesium ion binding"/>
    <property type="evidence" value="ECO:0007669"/>
    <property type="project" value="UniProtKB-UniRule"/>
</dbReference>
<dbReference type="GO" id="GO:0009102">
    <property type="term" value="P:biotin biosynthetic process"/>
    <property type="evidence" value="ECO:0007669"/>
    <property type="project" value="UniProtKB-UniRule"/>
</dbReference>
<dbReference type="CDD" id="cd03109">
    <property type="entry name" value="DTBS"/>
    <property type="match status" value="1"/>
</dbReference>
<dbReference type="Gene3D" id="3.40.50.300">
    <property type="entry name" value="P-loop containing nucleotide triphosphate hydrolases"/>
    <property type="match status" value="1"/>
</dbReference>
<dbReference type="HAMAP" id="MF_00336">
    <property type="entry name" value="BioD"/>
    <property type="match status" value="1"/>
</dbReference>
<dbReference type="InterPro" id="IPR004472">
    <property type="entry name" value="DTB_synth_BioD"/>
</dbReference>
<dbReference type="InterPro" id="IPR027417">
    <property type="entry name" value="P-loop_NTPase"/>
</dbReference>
<dbReference type="NCBIfam" id="TIGR00347">
    <property type="entry name" value="bioD"/>
    <property type="match status" value="1"/>
</dbReference>
<dbReference type="PANTHER" id="PTHR43210">
    <property type="entry name" value="DETHIOBIOTIN SYNTHETASE"/>
    <property type="match status" value="1"/>
</dbReference>
<dbReference type="PANTHER" id="PTHR43210:SF5">
    <property type="entry name" value="DETHIOBIOTIN SYNTHETASE"/>
    <property type="match status" value="1"/>
</dbReference>
<dbReference type="Pfam" id="PF13500">
    <property type="entry name" value="AAA_26"/>
    <property type="match status" value="1"/>
</dbReference>
<dbReference type="PIRSF" id="PIRSF006755">
    <property type="entry name" value="DTB_synth"/>
    <property type="match status" value="1"/>
</dbReference>
<dbReference type="SUPFAM" id="SSF52540">
    <property type="entry name" value="P-loop containing nucleoside triphosphate hydrolases"/>
    <property type="match status" value="1"/>
</dbReference>
<protein>
    <recommendedName>
        <fullName evidence="1">ATP-dependent dethiobiotin synthetase BioD</fullName>
        <ecNumber evidence="1">6.3.3.3</ecNumber>
    </recommendedName>
    <alternativeName>
        <fullName evidence="1">DTB synthetase</fullName>
        <shortName evidence="1">DTBS</shortName>
    </alternativeName>
    <alternativeName>
        <fullName evidence="1">Dethiobiotin synthase</fullName>
    </alternativeName>
</protein>
<accession>A1UHM2</accession>
<name>BIOD_MYCSK</name>
<gene>
    <name evidence="1" type="primary">bioD</name>
    <name type="ordered locus">Mkms_3136</name>
</gene>
<reference key="1">
    <citation type="submission" date="2006-12" db="EMBL/GenBank/DDBJ databases">
        <title>Complete sequence of chromosome of Mycobacterium sp. KMS.</title>
        <authorList>
            <consortium name="US DOE Joint Genome Institute"/>
            <person name="Copeland A."/>
            <person name="Lucas S."/>
            <person name="Lapidus A."/>
            <person name="Barry K."/>
            <person name="Detter J.C."/>
            <person name="Glavina del Rio T."/>
            <person name="Hammon N."/>
            <person name="Israni S."/>
            <person name="Dalin E."/>
            <person name="Tice H."/>
            <person name="Pitluck S."/>
            <person name="Kiss H."/>
            <person name="Brettin T."/>
            <person name="Bruce D."/>
            <person name="Han C."/>
            <person name="Tapia R."/>
            <person name="Gilna P."/>
            <person name="Schmutz J."/>
            <person name="Larimer F."/>
            <person name="Land M."/>
            <person name="Hauser L."/>
            <person name="Kyrpides N."/>
            <person name="Mikhailova N."/>
            <person name="Miller C.D."/>
            <person name="Richardson P."/>
        </authorList>
    </citation>
    <scope>NUCLEOTIDE SEQUENCE [LARGE SCALE GENOMIC DNA]</scope>
    <source>
        <strain>KMS</strain>
    </source>
</reference>
<proteinExistence type="inferred from homology"/>
<evidence type="ECO:0000255" key="1">
    <source>
        <dbReference type="HAMAP-Rule" id="MF_00336"/>
    </source>
</evidence>
<sequence length="229" mass="22903">MSVLVITGTDTGVGKTVATAALACAARVAGIDVAVCKPVQTGTGPVGGTGDDDLVEIGRLAGVDALHPGWRYPDPLAPVAAAERAGAALPTRDELIGMVRAADAPGRLTLVEGAGGLLVELGQDAVTLRDVATELDAPVLVVVAPGLGTLNHTALTLESLAAQHVPCAGLVIGAWPAQPGAAEIDNRDTLARLAPVRAALPAGVGSVSPVDFERISATAFDPNWLAGLL</sequence>
<keyword id="KW-0067">ATP-binding</keyword>
<keyword id="KW-0093">Biotin biosynthesis</keyword>
<keyword id="KW-0963">Cytoplasm</keyword>
<keyword id="KW-0436">Ligase</keyword>
<keyword id="KW-0460">Magnesium</keyword>
<keyword id="KW-0479">Metal-binding</keyword>
<keyword id="KW-0547">Nucleotide-binding</keyword>
<feature type="chain" id="PRO_0000302527" description="ATP-dependent dethiobiotin synthetase BioD">
    <location>
        <begin position="1"/>
        <end position="229"/>
    </location>
</feature>
<feature type="active site" evidence="1">
    <location>
        <position position="37"/>
    </location>
</feature>
<feature type="binding site" evidence="1">
    <location>
        <begin position="12"/>
        <end position="17"/>
    </location>
    <ligand>
        <name>ATP</name>
        <dbReference type="ChEBI" id="CHEBI:30616"/>
    </ligand>
</feature>
<feature type="binding site" evidence="1">
    <location>
        <position position="16"/>
    </location>
    <ligand>
        <name>Mg(2+)</name>
        <dbReference type="ChEBI" id="CHEBI:18420"/>
    </ligand>
</feature>
<feature type="binding site" evidence="1">
    <location>
        <position position="41"/>
    </location>
    <ligand>
        <name>substrate</name>
    </ligand>
</feature>
<feature type="binding site" evidence="1">
    <location>
        <position position="53"/>
    </location>
    <ligand>
        <name>ATP</name>
        <dbReference type="ChEBI" id="CHEBI:30616"/>
    </ligand>
</feature>
<feature type="binding site" evidence="1">
    <location>
        <position position="53"/>
    </location>
    <ligand>
        <name>Mg(2+)</name>
        <dbReference type="ChEBI" id="CHEBI:18420"/>
    </ligand>
</feature>
<feature type="binding site" evidence="1">
    <location>
        <begin position="112"/>
        <end position="115"/>
    </location>
    <ligand>
        <name>ATP</name>
        <dbReference type="ChEBI" id="CHEBI:30616"/>
    </ligand>
</feature>
<feature type="binding site" evidence="1">
    <location>
        <position position="112"/>
    </location>
    <ligand>
        <name>Mg(2+)</name>
        <dbReference type="ChEBI" id="CHEBI:18420"/>
    </ligand>
</feature>
<feature type="binding site" evidence="1">
    <location>
        <begin position="201"/>
        <end position="203"/>
    </location>
    <ligand>
        <name>ATP</name>
        <dbReference type="ChEBI" id="CHEBI:30616"/>
    </ligand>
</feature>
<organism>
    <name type="scientific">Mycobacterium sp. (strain KMS)</name>
    <dbReference type="NCBI Taxonomy" id="189918"/>
    <lineage>
        <taxon>Bacteria</taxon>
        <taxon>Bacillati</taxon>
        <taxon>Actinomycetota</taxon>
        <taxon>Actinomycetes</taxon>
        <taxon>Mycobacteriales</taxon>
        <taxon>Mycobacteriaceae</taxon>
        <taxon>Mycobacterium</taxon>
    </lineage>
</organism>
<comment type="function">
    <text evidence="1">Catalyzes a mechanistically unusual reaction, the ATP-dependent insertion of CO2 between the N7 and N8 nitrogen atoms of 7,8-diaminopelargonic acid (DAPA, also called 7,8-diammoniononanoate) to form a ureido ring.</text>
</comment>
<comment type="catalytic activity">
    <reaction evidence="1">
        <text>(7R,8S)-7,8-diammoniononanoate + CO2 + ATP = (4R,5S)-dethiobiotin + ADP + phosphate + 3 H(+)</text>
        <dbReference type="Rhea" id="RHEA:15805"/>
        <dbReference type="ChEBI" id="CHEBI:15378"/>
        <dbReference type="ChEBI" id="CHEBI:16526"/>
        <dbReference type="ChEBI" id="CHEBI:30616"/>
        <dbReference type="ChEBI" id="CHEBI:43474"/>
        <dbReference type="ChEBI" id="CHEBI:149469"/>
        <dbReference type="ChEBI" id="CHEBI:149473"/>
        <dbReference type="ChEBI" id="CHEBI:456216"/>
        <dbReference type="EC" id="6.3.3.3"/>
    </reaction>
</comment>
<comment type="cofactor">
    <cofactor evidence="1">
        <name>Mg(2+)</name>
        <dbReference type="ChEBI" id="CHEBI:18420"/>
    </cofactor>
</comment>
<comment type="pathway">
    <text evidence="1">Cofactor biosynthesis; biotin biosynthesis; biotin from 7,8-diaminononanoate: step 1/2.</text>
</comment>
<comment type="subunit">
    <text evidence="1">Homodimer.</text>
</comment>
<comment type="subcellular location">
    <subcellularLocation>
        <location evidence="1">Cytoplasm</location>
    </subcellularLocation>
</comment>
<comment type="similarity">
    <text evidence="1">Belongs to the dethiobiotin synthetase family.</text>
</comment>